<name>MURD_CHLT3</name>
<organism>
    <name type="scientific">Chloroherpeton thalassium (strain ATCC 35110 / GB-78)</name>
    <dbReference type="NCBI Taxonomy" id="517418"/>
    <lineage>
        <taxon>Bacteria</taxon>
        <taxon>Pseudomonadati</taxon>
        <taxon>Chlorobiota</taxon>
        <taxon>Chlorobiia</taxon>
        <taxon>Chlorobiales</taxon>
        <taxon>Chloroherpetonaceae</taxon>
        <taxon>Chloroherpeton</taxon>
    </lineage>
</organism>
<protein>
    <recommendedName>
        <fullName evidence="1">UDP-N-acetylmuramoylalanine--D-glutamate ligase</fullName>
        <ecNumber evidence="1">6.3.2.9</ecNumber>
    </recommendedName>
    <alternativeName>
        <fullName evidence="1">D-glutamic acid-adding enzyme</fullName>
    </alternativeName>
    <alternativeName>
        <fullName evidence="1">UDP-N-acetylmuramoyl-L-alanyl-D-glutamate synthetase</fullName>
    </alternativeName>
</protein>
<evidence type="ECO:0000255" key="1">
    <source>
        <dbReference type="HAMAP-Rule" id="MF_00639"/>
    </source>
</evidence>
<comment type="function">
    <text evidence="1">Cell wall formation. Catalyzes the addition of glutamate to the nucleotide precursor UDP-N-acetylmuramoyl-L-alanine (UMA).</text>
</comment>
<comment type="catalytic activity">
    <reaction evidence="1">
        <text>UDP-N-acetyl-alpha-D-muramoyl-L-alanine + D-glutamate + ATP = UDP-N-acetyl-alpha-D-muramoyl-L-alanyl-D-glutamate + ADP + phosphate + H(+)</text>
        <dbReference type="Rhea" id="RHEA:16429"/>
        <dbReference type="ChEBI" id="CHEBI:15378"/>
        <dbReference type="ChEBI" id="CHEBI:29986"/>
        <dbReference type="ChEBI" id="CHEBI:30616"/>
        <dbReference type="ChEBI" id="CHEBI:43474"/>
        <dbReference type="ChEBI" id="CHEBI:83898"/>
        <dbReference type="ChEBI" id="CHEBI:83900"/>
        <dbReference type="ChEBI" id="CHEBI:456216"/>
        <dbReference type="EC" id="6.3.2.9"/>
    </reaction>
</comment>
<comment type="pathway">
    <text evidence="1">Cell wall biogenesis; peptidoglycan biosynthesis.</text>
</comment>
<comment type="subcellular location">
    <subcellularLocation>
        <location evidence="1">Cytoplasm</location>
    </subcellularLocation>
</comment>
<comment type="similarity">
    <text evidence="1">Belongs to the MurCDEF family.</text>
</comment>
<keyword id="KW-0067">ATP-binding</keyword>
<keyword id="KW-0131">Cell cycle</keyword>
<keyword id="KW-0132">Cell division</keyword>
<keyword id="KW-0133">Cell shape</keyword>
<keyword id="KW-0961">Cell wall biogenesis/degradation</keyword>
<keyword id="KW-0963">Cytoplasm</keyword>
<keyword id="KW-0436">Ligase</keyword>
<keyword id="KW-0547">Nucleotide-binding</keyword>
<keyword id="KW-0573">Peptidoglycan synthesis</keyword>
<keyword id="KW-1185">Reference proteome</keyword>
<proteinExistence type="inferred from homology"/>
<feature type="chain" id="PRO_1000130841" description="UDP-N-acetylmuramoylalanine--D-glutamate ligase">
    <location>
        <begin position="1"/>
        <end position="468"/>
    </location>
</feature>
<feature type="binding site" evidence="1">
    <location>
        <begin position="117"/>
        <end position="123"/>
    </location>
    <ligand>
        <name>ATP</name>
        <dbReference type="ChEBI" id="CHEBI:30616"/>
    </ligand>
</feature>
<gene>
    <name evidence="1" type="primary">murD</name>
    <name type="ordered locus">Ctha_0831</name>
</gene>
<sequence length="468" mass="51901">MTHEEIKGKRCAIIGGKRSGIAAAKLLSRAGAYVFLSEKSVPENQATLESDLRAHGIECEFGQHSEEVFDADFAIISPGVPSSAPVIKQLERAQVPVYSEIELASWFCKAKIIAITGTDGKTTVTTLTKKIFEADGNENGYHAYALGNIGQPFSDTVESLSENDVAVIEISSFQLEHCTSFRPNVTVITNITPDHLDRYDGNIQKYAAAKYRIYQNQTASDWLIYNDDNEILHQHFTDPERRASLPMKLVALSLEKNLGDEYEHCAYKENGRLVLKLTNEKEWLIEENQISTKQFRGQHNIYNALTAAAAASALGIDKKFIEKSILSFEGVEHRLEFVRAVNQVDYINDSKATTVNALWYALDTVTPKIVLIAGGRDKGNDYTKVFSFVKEKVRAVVAIGESQEKVVQAFGNLTKVMKAFSLDEAVRLASQEAEAGDTVLLSPACASFDMFSNFETRGKLFKEAVMNL</sequence>
<reference key="1">
    <citation type="submission" date="2008-06" db="EMBL/GenBank/DDBJ databases">
        <title>Complete sequence of Chloroherpeton thalassium ATCC 35110.</title>
        <authorList>
            <consortium name="US DOE Joint Genome Institute"/>
            <person name="Lucas S."/>
            <person name="Copeland A."/>
            <person name="Lapidus A."/>
            <person name="Glavina del Rio T."/>
            <person name="Dalin E."/>
            <person name="Tice H."/>
            <person name="Bruce D."/>
            <person name="Goodwin L."/>
            <person name="Pitluck S."/>
            <person name="Schmutz J."/>
            <person name="Larimer F."/>
            <person name="Land M."/>
            <person name="Hauser L."/>
            <person name="Kyrpides N."/>
            <person name="Mikhailova N."/>
            <person name="Liu Z."/>
            <person name="Li T."/>
            <person name="Zhao F."/>
            <person name="Overmann J."/>
            <person name="Bryant D.A."/>
            <person name="Richardson P."/>
        </authorList>
    </citation>
    <scope>NUCLEOTIDE SEQUENCE [LARGE SCALE GENOMIC DNA]</scope>
    <source>
        <strain>ATCC 35110 / GB-78</strain>
    </source>
</reference>
<dbReference type="EC" id="6.3.2.9" evidence="1"/>
<dbReference type="EMBL" id="CP001100">
    <property type="protein sequence ID" value="ACF13299.1"/>
    <property type="molecule type" value="Genomic_DNA"/>
</dbReference>
<dbReference type="RefSeq" id="WP_012499383.1">
    <property type="nucleotide sequence ID" value="NC_011026.1"/>
</dbReference>
<dbReference type="SMR" id="B3QWT5"/>
<dbReference type="STRING" id="517418.Ctha_0831"/>
<dbReference type="KEGG" id="cts:Ctha_0831"/>
<dbReference type="eggNOG" id="COG0771">
    <property type="taxonomic scope" value="Bacteria"/>
</dbReference>
<dbReference type="HOGENOM" id="CLU_032540_0_0_10"/>
<dbReference type="OrthoDB" id="9809796at2"/>
<dbReference type="UniPathway" id="UPA00219"/>
<dbReference type="Proteomes" id="UP000001208">
    <property type="component" value="Chromosome"/>
</dbReference>
<dbReference type="GO" id="GO:0005737">
    <property type="term" value="C:cytoplasm"/>
    <property type="evidence" value="ECO:0007669"/>
    <property type="project" value="UniProtKB-SubCell"/>
</dbReference>
<dbReference type="GO" id="GO:0005524">
    <property type="term" value="F:ATP binding"/>
    <property type="evidence" value="ECO:0007669"/>
    <property type="project" value="UniProtKB-UniRule"/>
</dbReference>
<dbReference type="GO" id="GO:0008764">
    <property type="term" value="F:UDP-N-acetylmuramoylalanine-D-glutamate ligase activity"/>
    <property type="evidence" value="ECO:0007669"/>
    <property type="project" value="UniProtKB-UniRule"/>
</dbReference>
<dbReference type="GO" id="GO:0051301">
    <property type="term" value="P:cell division"/>
    <property type="evidence" value="ECO:0007669"/>
    <property type="project" value="UniProtKB-KW"/>
</dbReference>
<dbReference type="GO" id="GO:0071555">
    <property type="term" value="P:cell wall organization"/>
    <property type="evidence" value="ECO:0007669"/>
    <property type="project" value="UniProtKB-KW"/>
</dbReference>
<dbReference type="GO" id="GO:0009252">
    <property type="term" value="P:peptidoglycan biosynthetic process"/>
    <property type="evidence" value="ECO:0007669"/>
    <property type="project" value="UniProtKB-UniRule"/>
</dbReference>
<dbReference type="GO" id="GO:0008360">
    <property type="term" value="P:regulation of cell shape"/>
    <property type="evidence" value="ECO:0007669"/>
    <property type="project" value="UniProtKB-KW"/>
</dbReference>
<dbReference type="Gene3D" id="3.90.190.20">
    <property type="entry name" value="Mur ligase, C-terminal domain"/>
    <property type="match status" value="1"/>
</dbReference>
<dbReference type="Gene3D" id="3.40.1190.10">
    <property type="entry name" value="Mur-like, catalytic domain"/>
    <property type="match status" value="1"/>
</dbReference>
<dbReference type="Gene3D" id="3.40.50.720">
    <property type="entry name" value="NAD(P)-binding Rossmann-like Domain"/>
    <property type="match status" value="1"/>
</dbReference>
<dbReference type="HAMAP" id="MF_00639">
    <property type="entry name" value="MurD"/>
    <property type="match status" value="1"/>
</dbReference>
<dbReference type="InterPro" id="IPR036565">
    <property type="entry name" value="Mur-like_cat_sf"/>
</dbReference>
<dbReference type="InterPro" id="IPR004101">
    <property type="entry name" value="Mur_ligase_C"/>
</dbReference>
<dbReference type="InterPro" id="IPR036615">
    <property type="entry name" value="Mur_ligase_C_dom_sf"/>
</dbReference>
<dbReference type="InterPro" id="IPR013221">
    <property type="entry name" value="Mur_ligase_cen"/>
</dbReference>
<dbReference type="InterPro" id="IPR005762">
    <property type="entry name" value="MurD"/>
</dbReference>
<dbReference type="NCBIfam" id="TIGR01087">
    <property type="entry name" value="murD"/>
    <property type="match status" value="1"/>
</dbReference>
<dbReference type="PANTHER" id="PTHR43692">
    <property type="entry name" value="UDP-N-ACETYLMURAMOYLALANINE--D-GLUTAMATE LIGASE"/>
    <property type="match status" value="1"/>
</dbReference>
<dbReference type="PANTHER" id="PTHR43692:SF1">
    <property type="entry name" value="UDP-N-ACETYLMURAMOYLALANINE--D-GLUTAMATE LIGASE"/>
    <property type="match status" value="1"/>
</dbReference>
<dbReference type="Pfam" id="PF02875">
    <property type="entry name" value="Mur_ligase_C"/>
    <property type="match status" value="1"/>
</dbReference>
<dbReference type="Pfam" id="PF08245">
    <property type="entry name" value="Mur_ligase_M"/>
    <property type="match status" value="1"/>
</dbReference>
<dbReference type="SUPFAM" id="SSF51984">
    <property type="entry name" value="MurCD N-terminal domain"/>
    <property type="match status" value="1"/>
</dbReference>
<dbReference type="SUPFAM" id="SSF53623">
    <property type="entry name" value="MurD-like peptide ligases, catalytic domain"/>
    <property type="match status" value="1"/>
</dbReference>
<dbReference type="SUPFAM" id="SSF53244">
    <property type="entry name" value="MurD-like peptide ligases, peptide-binding domain"/>
    <property type="match status" value="1"/>
</dbReference>
<accession>B3QWT5</accession>